<accession>A0A0J5ZXG5</accession>
<evidence type="ECO:0000250" key="1">
    <source>
        <dbReference type="UniProtKB" id="P0DV40"/>
    </source>
</evidence>
<evidence type="ECO:0000255" key="2">
    <source>
        <dbReference type="PROSITE-ProRule" id="PRU00099"/>
    </source>
</evidence>
<evidence type="ECO:0000269" key="3">
    <source>
    </source>
</evidence>
<evidence type="ECO:0000303" key="4">
    <source>
    </source>
</evidence>
<evidence type="ECO:0000303" key="5">
    <source ref="1"/>
</evidence>
<evidence type="ECO:0000305" key="6"/>
<evidence type="ECO:0000305" key="7">
    <source>
    </source>
</evidence>
<evidence type="ECO:0007744" key="8">
    <source>
        <dbReference type="PDB" id="7R65"/>
    </source>
</evidence>
<evidence type="ECO:0007829" key="9">
    <source>
        <dbReference type="PDB" id="7R65"/>
    </source>
</evidence>
<reference key="1">
    <citation type="submission" date="2015-05" db="EMBL/GenBank/DDBJ databases">
        <title>Draft genome of Burkholderia cepacia LK29.</title>
        <authorList>
            <person name="Chan X.Y."/>
        </authorList>
    </citation>
    <scope>NUCLEOTIDE SEQUENCE [LARGE SCALE GENOMIC DNA]</scope>
    <source>
        <strain>LK29</strain>
    </source>
</reference>
<reference evidence="8" key="2">
    <citation type="journal article" date="2021" name="Cell">
        <title>Cyclic CMP and cyclic UMP mediate bacterial immunity against phages.</title>
        <authorList>
            <person name="Tal N."/>
            <person name="Morehouse B.R."/>
            <person name="Millman A."/>
            <person name="Stokar-Avihail A."/>
            <person name="Avraham C."/>
            <person name="Fedorenko T."/>
            <person name="Yirmiya E."/>
            <person name="Herbst E."/>
            <person name="Brandis A."/>
            <person name="Mehlman T."/>
            <person name="Oppenheimer-Shaanan Y."/>
            <person name="Keszei A.F.A."/>
            <person name="Shao S."/>
            <person name="Amitai G."/>
            <person name="Kranzusch P.J."/>
            <person name="Sorek R."/>
        </authorList>
    </citation>
    <scope>X-RAY CRYSTALLOGRAPHY (1.45 ANGSTROMS) OF 2-229</scope>
    <scope>FUNCTION</scope>
    <scope>CATALYTIC ACTIVITY</scope>
    <scope>COFACTOR</scope>
    <scope>BIOPHYSICOCHEMICAL PROPERTIES</scope>
    <scope>SUBUNIT</scope>
    <scope>CLASSIFICATION</scope>
    <scope>MUTAGENESIS OF TYR-50; ASP-52; ASP-94; ASP-96; ARG-97; ASN-172 AND ASN-179</scope>
    <source>
        <strain>LK29</strain>
    </source>
</reference>
<dbReference type="EC" id="4.6.1.26" evidence="3"/>
<dbReference type="EMBL" id="LDWR01000021">
    <property type="protein sequence ID" value="KML58095.1"/>
    <property type="molecule type" value="Genomic_DNA"/>
</dbReference>
<dbReference type="RefSeq" id="WP_048245919.1">
    <property type="nucleotide sequence ID" value="NZ_LDWR01000021.1"/>
</dbReference>
<dbReference type="PDB" id="7R65">
    <property type="method" value="X-ray"/>
    <property type="resolution" value="1.45 A"/>
    <property type="chains" value="A/B/C/D=2-229"/>
</dbReference>
<dbReference type="PDBsum" id="7R65"/>
<dbReference type="SMR" id="A0A0J5ZXG5"/>
<dbReference type="PATRIC" id="fig|292.27.peg.2412"/>
<dbReference type="BioCyc" id="MetaCyc:MONOMER-21981"/>
<dbReference type="Proteomes" id="UP000036338">
    <property type="component" value="Unassembled WGS sequence"/>
</dbReference>
<dbReference type="GO" id="GO:0005737">
    <property type="term" value="C:cytoplasm"/>
    <property type="evidence" value="ECO:0007669"/>
    <property type="project" value="UniProtKB-SubCell"/>
</dbReference>
<dbReference type="GO" id="GO:0004016">
    <property type="term" value="F:adenylate cyclase activity"/>
    <property type="evidence" value="ECO:0007669"/>
    <property type="project" value="UniProtKB-ARBA"/>
</dbReference>
<dbReference type="GO" id="GO:0046872">
    <property type="term" value="F:metal ion binding"/>
    <property type="evidence" value="ECO:0007669"/>
    <property type="project" value="UniProtKB-KW"/>
</dbReference>
<dbReference type="GO" id="GO:0000166">
    <property type="term" value="F:nucleotide binding"/>
    <property type="evidence" value="ECO:0007669"/>
    <property type="project" value="UniProtKB-KW"/>
</dbReference>
<dbReference type="GO" id="GO:0009190">
    <property type="term" value="P:cyclic nucleotide biosynthetic process"/>
    <property type="evidence" value="ECO:0007669"/>
    <property type="project" value="InterPro"/>
</dbReference>
<dbReference type="GO" id="GO:0051607">
    <property type="term" value="P:defense response to virus"/>
    <property type="evidence" value="ECO:0007669"/>
    <property type="project" value="UniProtKB-KW"/>
</dbReference>
<dbReference type="GO" id="GO:0035556">
    <property type="term" value="P:intracellular signal transduction"/>
    <property type="evidence" value="ECO:0007669"/>
    <property type="project" value="InterPro"/>
</dbReference>
<dbReference type="Gene3D" id="3.30.70.1230">
    <property type="entry name" value="Nucleotide cyclase"/>
    <property type="match status" value="1"/>
</dbReference>
<dbReference type="InterPro" id="IPR001054">
    <property type="entry name" value="A/G_cyclase"/>
</dbReference>
<dbReference type="InterPro" id="IPR029787">
    <property type="entry name" value="Nucleotide_cyclase"/>
</dbReference>
<dbReference type="Pfam" id="PF00211">
    <property type="entry name" value="Guanylate_cyc"/>
    <property type="match status" value="1"/>
</dbReference>
<dbReference type="SUPFAM" id="SSF55073">
    <property type="entry name" value="Nucleotide cyclase"/>
    <property type="match status" value="1"/>
</dbReference>
<dbReference type="PROSITE" id="PS50125">
    <property type="entry name" value="GUANYLATE_CYCLASE_2"/>
    <property type="match status" value="1"/>
</dbReference>
<organism>
    <name type="scientific">Burkholderia cepacia</name>
    <name type="common">Pseudomonas cepacia</name>
    <dbReference type="NCBI Taxonomy" id="292"/>
    <lineage>
        <taxon>Bacteria</taxon>
        <taxon>Pseudomonadati</taxon>
        <taxon>Pseudomonadota</taxon>
        <taxon>Betaproteobacteria</taxon>
        <taxon>Burkholderiales</taxon>
        <taxon>Burkholderiaceae</taxon>
        <taxon>Burkholderia</taxon>
        <taxon>Burkholderia cepacia complex</taxon>
    </lineage>
</organism>
<feature type="chain" id="PRO_0000455221" description="Uridylate cyclase">
    <location>
        <begin position="1"/>
        <end position="229"/>
    </location>
</feature>
<feature type="domain" description="Guanylate cyclase" evidence="2">
    <location>
        <begin position="47"/>
        <end position="178"/>
    </location>
</feature>
<feature type="binding site" evidence="1 7">
    <location>
        <position position="50"/>
    </location>
    <ligand>
        <name>a ribonucleoside 5'-triphosphate</name>
        <dbReference type="ChEBI" id="CHEBI:61557"/>
    </ligand>
</feature>
<feature type="binding site" evidence="7">
    <location>
        <position position="52"/>
    </location>
    <ligand>
        <name>Mn(2+)</name>
        <dbReference type="ChEBI" id="CHEBI:29035"/>
        <label>1</label>
    </ligand>
</feature>
<feature type="binding site" evidence="7">
    <location>
        <position position="52"/>
    </location>
    <ligand>
        <name>Mn(2+)</name>
        <dbReference type="ChEBI" id="CHEBI:29035"/>
        <label>2</label>
    </ligand>
</feature>
<feature type="binding site" evidence="7">
    <location>
        <position position="96"/>
    </location>
    <ligand>
        <name>Mn(2+)</name>
        <dbReference type="ChEBI" id="CHEBI:29035"/>
        <label>1</label>
    </ligand>
</feature>
<feature type="binding site" evidence="7">
    <location>
        <position position="96"/>
    </location>
    <ligand>
        <name>Mn(2+)</name>
        <dbReference type="ChEBI" id="CHEBI:29035"/>
        <label>2</label>
    </ligand>
</feature>
<feature type="binding site" evidence="1 7">
    <location>
        <position position="97"/>
    </location>
    <ligand>
        <name>a ribonucleoside 5'-triphosphate</name>
        <dbReference type="ChEBI" id="CHEBI:61557"/>
    </ligand>
</feature>
<feature type="mutagenesis site" description="Decreased cUMP production." evidence="3">
    <original>Y</original>
    <variation>A</variation>
    <location>
        <position position="50"/>
    </location>
</feature>
<feature type="mutagenesis site" description="No cUMP production." evidence="3">
    <original>D</original>
    <variation>A</variation>
    <location>
        <position position="52"/>
    </location>
</feature>
<feature type="mutagenesis site" description="Decreased cUMP production." evidence="3">
    <original>D</original>
    <variation>A</variation>
    <location>
        <position position="94"/>
    </location>
</feature>
<feature type="mutagenesis site" description="No cUMP production." evidence="3">
    <original>D</original>
    <variation>A</variation>
    <location>
        <position position="96"/>
    </location>
</feature>
<feature type="mutagenesis site" description="Decreased cUMP production." evidence="3">
    <original>R</original>
    <variation>A</variation>
    <location>
        <position position="97"/>
    </location>
</feature>
<feature type="mutagenesis site" description="Almost no cUMP production." evidence="3">
    <original>N</original>
    <variation>A</variation>
    <location>
        <position position="172"/>
    </location>
</feature>
<feature type="mutagenesis site" description="Wild-type cUMP production." evidence="3">
    <original>N</original>
    <variation>A</variation>
    <location>
        <position position="179"/>
    </location>
</feature>
<feature type="helix" evidence="9">
    <location>
        <begin position="2"/>
        <end position="16"/>
    </location>
</feature>
<feature type="strand" evidence="9">
    <location>
        <begin position="20"/>
        <end position="23"/>
    </location>
</feature>
<feature type="helix" evidence="9">
    <location>
        <begin position="30"/>
        <end position="32"/>
    </location>
</feature>
<feature type="strand" evidence="9">
    <location>
        <begin position="37"/>
        <end position="53"/>
    </location>
</feature>
<feature type="helix" evidence="9">
    <location>
        <begin position="56"/>
        <end position="62"/>
    </location>
</feature>
<feature type="helix" evidence="9">
    <location>
        <begin position="65"/>
        <end position="85"/>
    </location>
</feature>
<feature type="strand" evidence="9">
    <location>
        <begin position="89"/>
        <end position="94"/>
    </location>
</feature>
<feature type="strand" evidence="9">
    <location>
        <begin position="97"/>
        <end position="102"/>
    </location>
</feature>
<feature type="helix" evidence="9">
    <location>
        <begin position="107"/>
        <end position="124"/>
    </location>
</feature>
<feature type="helix" evidence="9">
    <location>
        <begin position="126"/>
        <end position="134"/>
    </location>
</feature>
<feature type="strand" evidence="9">
    <location>
        <begin position="142"/>
        <end position="156"/>
    </location>
</feature>
<feature type="strand" evidence="9">
    <location>
        <begin position="158"/>
        <end position="160"/>
    </location>
</feature>
<feature type="strand" evidence="9">
    <location>
        <begin position="163"/>
        <end position="168"/>
    </location>
</feature>
<feature type="helix" evidence="9">
    <location>
        <begin position="169"/>
        <end position="178"/>
    </location>
</feature>
<feature type="strand" evidence="9">
    <location>
        <begin position="184"/>
        <end position="188"/>
    </location>
</feature>
<feature type="helix" evidence="9">
    <location>
        <begin position="189"/>
        <end position="192"/>
    </location>
</feature>
<feature type="helix" evidence="9">
    <location>
        <begin position="197"/>
        <end position="199"/>
    </location>
</feature>
<feature type="strand" evidence="9">
    <location>
        <begin position="205"/>
        <end position="207"/>
    </location>
</feature>
<feature type="strand" evidence="9">
    <location>
        <begin position="209"/>
        <end position="213"/>
    </location>
</feature>
<feature type="turn" evidence="9">
    <location>
        <begin position="214"/>
        <end position="217"/>
    </location>
</feature>
<feature type="strand" evidence="9">
    <location>
        <begin position="218"/>
        <end position="223"/>
    </location>
</feature>
<sequence>MALADDLKKWVGETFTGKWEVQETTSVPNPEDLRLNSNHAKDLKAATVLYADLDGSTDMVNTKKWQFSAQIYKTFLKCASDIIRDEGGNITAYDGDRVMAVFTGNSKNTSAARCALKINSAVLDIIQPAIAKKWQTDFVLRHVVGIDTSQLRTARIGIRGDNDLVWIGRAANYAAKLTNLAGKPTRITADVYNKLADKLKYANGVDMWAPEHWDDMGIWTYTSTWKWTV</sequence>
<protein>
    <recommendedName>
        <fullName evidence="4">Uridylate cyclase</fullName>
        <ecNumber evidence="3">4.6.1.26</ecNumber>
    </recommendedName>
    <alternativeName>
        <fullName evidence="4">BcPycC</fullName>
    </alternativeName>
    <alternativeName>
        <fullName evidence="4">Cyclic UMP synthase</fullName>
        <shortName evidence="4">cUMP synthase</shortName>
    </alternativeName>
</protein>
<name>PYCC_BURCE</name>
<gene>
    <name evidence="4" type="primary">pycC</name>
    <name evidence="5" type="ORF">VL15_12785</name>
</gene>
<comment type="function">
    <text evidence="7">Pycsar (pyrimidine cyclase system for antiphage resistance) provides immunity against bacteriophage. The pyrimidine cyclase (PycC) synthesizes cyclic nucleotides in response to infection; these serve as specific second messenger signals. The signals activate the adjacent effector, leading to bacterial cell death and abortive phage infection. A clade B Pycsar system.</text>
</comment>
<comment type="function">
    <text evidence="3 7">The pyrimidine cyclase gene of a two-gene Pycsar system, generates cyclic UMP (cUMP) from UTP, has little to no activity on ATP, CTP or GTP (PubMed:34644530). Expression of this and adjacent effector BcPycTIR (AC A0A0J5WTU0) probably confers resistance to bacteriophage. The genes are probably only expressed in response to bacteriophage infection (Probable).</text>
</comment>
<comment type="catalytic activity">
    <reaction evidence="3">
        <text>UTP = 3',5'-cyclic UMP + diphosphate</text>
        <dbReference type="Rhea" id="RHEA:69603"/>
        <dbReference type="ChEBI" id="CHEBI:33019"/>
        <dbReference type="ChEBI" id="CHEBI:46398"/>
        <dbReference type="ChEBI" id="CHEBI:184387"/>
        <dbReference type="EC" id="4.6.1.26"/>
    </reaction>
</comment>
<comment type="cofactor">
    <cofactor evidence="3">
        <name>Mn(2+)</name>
        <dbReference type="ChEBI" id="CHEBI:29035"/>
    </cofactor>
    <text evidence="3">Slightly more active with Mn(2+) than with Mg(2+).</text>
</comment>
<comment type="biophysicochemical properties">
    <phDependence>
        <text evidence="3">Optimum pH is 7.0-9.5.</text>
    </phDependence>
</comment>
<comment type="subunit">
    <text evidence="3">Homodimer.</text>
</comment>
<comment type="subcellular location">
    <subcellularLocation>
        <location evidence="6">Cytoplasm</location>
    </subcellularLocation>
</comment>
<comment type="similarity">
    <text evidence="7">Belongs to the adenylyl cyclase class-4/guanylyl cyclase family. Pyrimidine cyclase subfamily.</text>
</comment>
<proteinExistence type="evidence at protein level"/>
<keyword id="KW-0002">3D-structure</keyword>
<keyword id="KW-0051">Antiviral defense</keyword>
<keyword id="KW-0963">Cytoplasm</keyword>
<keyword id="KW-0456">Lyase</keyword>
<keyword id="KW-0464">Manganese</keyword>
<keyword id="KW-0479">Metal-binding</keyword>
<keyword id="KW-0547">Nucleotide-binding</keyword>